<comment type="function">
    <text evidence="1">Associates with the EF-Tu.GDP complex and induces the exchange of GDP to GTP. It remains bound to the aminoacyl-tRNA.EF-Tu.GTP complex up to the GTP hydrolysis stage on the ribosome.</text>
</comment>
<comment type="subcellular location">
    <subcellularLocation>
        <location evidence="1">Cytoplasm</location>
    </subcellularLocation>
</comment>
<comment type="similarity">
    <text evidence="1">Belongs to the EF-Ts family.</text>
</comment>
<feature type="chain" id="PRO_1000117579" description="Elongation factor Ts">
    <location>
        <begin position="1"/>
        <end position="283"/>
    </location>
</feature>
<feature type="region of interest" description="Involved in Mg(2+) ion dislocation from EF-Tu" evidence="1">
    <location>
        <begin position="80"/>
        <end position="83"/>
    </location>
</feature>
<gene>
    <name evidence="1" type="primary">tsf</name>
    <name type="ordered locus">EC55989_0164</name>
</gene>
<accession>B7LGN1</accession>
<keyword id="KW-0963">Cytoplasm</keyword>
<keyword id="KW-0251">Elongation factor</keyword>
<keyword id="KW-0648">Protein biosynthesis</keyword>
<keyword id="KW-1185">Reference proteome</keyword>
<organism>
    <name type="scientific">Escherichia coli (strain 55989 / EAEC)</name>
    <dbReference type="NCBI Taxonomy" id="585055"/>
    <lineage>
        <taxon>Bacteria</taxon>
        <taxon>Pseudomonadati</taxon>
        <taxon>Pseudomonadota</taxon>
        <taxon>Gammaproteobacteria</taxon>
        <taxon>Enterobacterales</taxon>
        <taxon>Enterobacteriaceae</taxon>
        <taxon>Escherichia</taxon>
    </lineage>
</organism>
<name>EFTS_ECO55</name>
<evidence type="ECO:0000255" key="1">
    <source>
        <dbReference type="HAMAP-Rule" id="MF_00050"/>
    </source>
</evidence>
<dbReference type="EMBL" id="CU928145">
    <property type="protein sequence ID" value="CAU96050.1"/>
    <property type="molecule type" value="Genomic_DNA"/>
</dbReference>
<dbReference type="RefSeq" id="WP_000818114.1">
    <property type="nucleotide sequence ID" value="NZ_CP028304.1"/>
</dbReference>
<dbReference type="SMR" id="B7LGN1"/>
<dbReference type="GeneID" id="93777255"/>
<dbReference type="KEGG" id="eck:EC55989_0164"/>
<dbReference type="HOGENOM" id="CLU_047155_0_2_6"/>
<dbReference type="Proteomes" id="UP000000746">
    <property type="component" value="Chromosome"/>
</dbReference>
<dbReference type="GO" id="GO:0005737">
    <property type="term" value="C:cytoplasm"/>
    <property type="evidence" value="ECO:0007669"/>
    <property type="project" value="UniProtKB-SubCell"/>
</dbReference>
<dbReference type="GO" id="GO:0003746">
    <property type="term" value="F:translation elongation factor activity"/>
    <property type="evidence" value="ECO:0007669"/>
    <property type="project" value="UniProtKB-UniRule"/>
</dbReference>
<dbReference type="CDD" id="cd14275">
    <property type="entry name" value="UBA_EF-Ts"/>
    <property type="match status" value="1"/>
</dbReference>
<dbReference type="FunFam" id="1.10.286.20:FF:000001">
    <property type="entry name" value="Elongation factor Ts"/>
    <property type="match status" value="1"/>
</dbReference>
<dbReference type="FunFam" id="1.10.8.10:FF:000001">
    <property type="entry name" value="Elongation factor Ts"/>
    <property type="match status" value="1"/>
</dbReference>
<dbReference type="FunFam" id="3.30.479.20:FF:000001">
    <property type="entry name" value="Elongation factor Ts"/>
    <property type="match status" value="1"/>
</dbReference>
<dbReference type="Gene3D" id="1.10.286.20">
    <property type="match status" value="1"/>
</dbReference>
<dbReference type="Gene3D" id="1.10.8.10">
    <property type="entry name" value="DNA helicase RuvA subunit, C-terminal domain"/>
    <property type="match status" value="1"/>
</dbReference>
<dbReference type="Gene3D" id="3.30.479.20">
    <property type="entry name" value="Elongation factor Ts, dimerisation domain"/>
    <property type="match status" value="2"/>
</dbReference>
<dbReference type="HAMAP" id="MF_00050">
    <property type="entry name" value="EF_Ts"/>
    <property type="match status" value="1"/>
</dbReference>
<dbReference type="InterPro" id="IPR036402">
    <property type="entry name" value="EF-Ts_dimer_sf"/>
</dbReference>
<dbReference type="InterPro" id="IPR001816">
    <property type="entry name" value="Transl_elong_EFTs/EF1B"/>
</dbReference>
<dbReference type="InterPro" id="IPR014039">
    <property type="entry name" value="Transl_elong_EFTs/EF1B_dimer"/>
</dbReference>
<dbReference type="InterPro" id="IPR018101">
    <property type="entry name" value="Transl_elong_Ts_CS"/>
</dbReference>
<dbReference type="InterPro" id="IPR009060">
    <property type="entry name" value="UBA-like_sf"/>
</dbReference>
<dbReference type="NCBIfam" id="TIGR00116">
    <property type="entry name" value="tsf"/>
    <property type="match status" value="1"/>
</dbReference>
<dbReference type="PANTHER" id="PTHR11741">
    <property type="entry name" value="ELONGATION FACTOR TS"/>
    <property type="match status" value="1"/>
</dbReference>
<dbReference type="PANTHER" id="PTHR11741:SF0">
    <property type="entry name" value="ELONGATION FACTOR TS, MITOCHONDRIAL"/>
    <property type="match status" value="1"/>
</dbReference>
<dbReference type="Pfam" id="PF00889">
    <property type="entry name" value="EF_TS"/>
    <property type="match status" value="1"/>
</dbReference>
<dbReference type="SUPFAM" id="SSF54713">
    <property type="entry name" value="Elongation factor Ts (EF-Ts), dimerisation domain"/>
    <property type="match status" value="2"/>
</dbReference>
<dbReference type="SUPFAM" id="SSF46934">
    <property type="entry name" value="UBA-like"/>
    <property type="match status" value="1"/>
</dbReference>
<dbReference type="PROSITE" id="PS01126">
    <property type="entry name" value="EF_TS_1"/>
    <property type="match status" value="1"/>
</dbReference>
<dbReference type="PROSITE" id="PS01127">
    <property type="entry name" value="EF_TS_2"/>
    <property type="match status" value="1"/>
</dbReference>
<protein>
    <recommendedName>
        <fullName evidence="1">Elongation factor Ts</fullName>
        <shortName evidence="1">EF-Ts</shortName>
    </recommendedName>
</protein>
<proteinExistence type="inferred from homology"/>
<sequence>MAEITASLVKELRERTGAGMMDCKKALTEANGDIELAIENMRKSGAIKAAKKAGNVAADGVIKTKIDGNYGIILEVNCQTDFVAKDAGFQAFADKVLDAAVAGKITDVEVLKAQFEEERVALVAKIGENINIRRVAALEGDVLGSYQHGARIGVLVAAKGADEELVKHIAMHVAASKPEFIKPEDVSAEVVEKEYQVQLDIAMQSGKPKEIAEKMVEGRMKKFTGEVSLTGQPFVMEPSKTVGQLLKEHNAEVTGFIRFEVGEGIEKVETDFAAEVAAMSKQS</sequence>
<reference key="1">
    <citation type="journal article" date="2009" name="PLoS Genet.">
        <title>Organised genome dynamics in the Escherichia coli species results in highly diverse adaptive paths.</title>
        <authorList>
            <person name="Touchon M."/>
            <person name="Hoede C."/>
            <person name="Tenaillon O."/>
            <person name="Barbe V."/>
            <person name="Baeriswyl S."/>
            <person name="Bidet P."/>
            <person name="Bingen E."/>
            <person name="Bonacorsi S."/>
            <person name="Bouchier C."/>
            <person name="Bouvet O."/>
            <person name="Calteau A."/>
            <person name="Chiapello H."/>
            <person name="Clermont O."/>
            <person name="Cruveiller S."/>
            <person name="Danchin A."/>
            <person name="Diard M."/>
            <person name="Dossat C."/>
            <person name="Karoui M.E."/>
            <person name="Frapy E."/>
            <person name="Garry L."/>
            <person name="Ghigo J.M."/>
            <person name="Gilles A.M."/>
            <person name="Johnson J."/>
            <person name="Le Bouguenec C."/>
            <person name="Lescat M."/>
            <person name="Mangenot S."/>
            <person name="Martinez-Jehanne V."/>
            <person name="Matic I."/>
            <person name="Nassif X."/>
            <person name="Oztas S."/>
            <person name="Petit M.A."/>
            <person name="Pichon C."/>
            <person name="Rouy Z."/>
            <person name="Ruf C.S."/>
            <person name="Schneider D."/>
            <person name="Tourret J."/>
            <person name="Vacherie B."/>
            <person name="Vallenet D."/>
            <person name="Medigue C."/>
            <person name="Rocha E.P.C."/>
            <person name="Denamur E."/>
        </authorList>
    </citation>
    <scope>NUCLEOTIDE SEQUENCE [LARGE SCALE GENOMIC DNA]</scope>
    <source>
        <strain>55989 / EAEC</strain>
    </source>
</reference>